<evidence type="ECO:0000255" key="1">
    <source>
        <dbReference type="HAMAP-Rule" id="MF_00244"/>
    </source>
</evidence>
<name>NADD_ALIB4</name>
<protein>
    <recommendedName>
        <fullName evidence="1">Probable nicotinate-nucleotide adenylyltransferase</fullName>
        <ecNumber evidence="1">2.7.7.18</ecNumber>
    </recommendedName>
    <alternativeName>
        <fullName evidence="1">Deamido-NAD(+) diphosphorylase</fullName>
    </alternativeName>
    <alternativeName>
        <fullName evidence="1">Deamido-NAD(+) pyrophosphorylase</fullName>
    </alternativeName>
    <alternativeName>
        <fullName evidence="1">Nicotinate mononucleotide adenylyltransferase</fullName>
        <shortName evidence="1">NaMN adenylyltransferase</shortName>
    </alternativeName>
</protein>
<comment type="function">
    <text evidence="1">Catalyzes the reversible adenylation of nicotinate mononucleotide (NaMN) to nicotinic acid adenine dinucleotide (NaAD).</text>
</comment>
<comment type="catalytic activity">
    <reaction evidence="1">
        <text>nicotinate beta-D-ribonucleotide + ATP + H(+) = deamido-NAD(+) + diphosphate</text>
        <dbReference type="Rhea" id="RHEA:22860"/>
        <dbReference type="ChEBI" id="CHEBI:15378"/>
        <dbReference type="ChEBI" id="CHEBI:30616"/>
        <dbReference type="ChEBI" id="CHEBI:33019"/>
        <dbReference type="ChEBI" id="CHEBI:57502"/>
        <dbReference type="ChEBI" id="CHEBI:58437"/>
        <dbReference type="EC" id="2.7.7.18"/>
    </reaction>
</comment>
<comment type="pathway">
    <text evidence="1">Cofactor biosynthesis; NAD(+) biosynthesis; deamido-NAD(+) from nicotinate D-ribonucleotide: step 1/1.</text>
</comment>
<comment type="similarity">
    <text evidence="1">Belongs to the NadD family.</text>
</comment>
<keyword id="KW-0067">ATP-binding</keyword>
<keyword id="KW-0520">NAD</keyword>
<keyword id="KW-0547">Nucleotide-binding</keyword>
<keyword id="KW-0548">Nucleotidyltransferase</keyword>
<keyword id="KW-0662">Pyridine nucleotide biosynthesis</keyword>
<keyword id="KW-1185">Reference proteome</keyword>
<keyword id="KW-0808">Transferase</keyword>
<organism>
    <name type="scientific">Aliarcobacter butzleri (strain RM4018)</name>
    <name type="common">Arcobacter butzleri</name>
    <dbReference type="NCBI Taxonomy" id="367737"/>
    <lineage>
        <taxon>Bacteria</taxon>
        <taxon>Pseudomonadati</taxon>
        <taxon>Campylobacterota</taxon>
        <taxon>Epsilonproteobacteria</taxon>
        <taxon>Campylobacterales</taxon>
        <taxon>Arcobacteraceae</taxon>
        <taxon>Aliarcobacter</taxon>
    </lineage>
</organism>
<gene>
    <name evidence="1" type="primary">nadD</name>
    <name type="ordered locus">Abu_2131</name>
</gene>
<proteinExistence type="inferred from homology"/>
<feature type="chain" id="PRO_1000058988" description="Probable nicotinate-nucleotide adenylyltransferase">
    <location>
        <begin position="1"/>
        <end position="182"/>
    </location>
</feature>
<reference key="1">
    <citation type="journal article" date="2007" name="PLoS ONE">
        <title>The complete genome sequence and analysis of the Epsilonproteobacterium Arcobacter butzleri.</title>
        <authorList>
            <person name="Miller W.G."/>
            <person name="Parker C.T."/>
            <person name="Rubenfield M."/>
            <person name="Mendz G.L."/>
            <person name="Woesten M.M.S.M."/>
            <person name="Ussery D.W."/>
            <person name="Stolz J.F."/>
            <person name="Binnewies T.T."/>
            <person name="Hallin P.F."/>
            <person name="Wang G."/>
            <person name="Malek J.A."/>
            <person name="Rogosin A."/>
            <person name="Stanker L.H."/>
            <person name="Mandrell R.E."/>
        </authorList>
    </citation>
    <scope>NUCLEOTIDE SEQUENCE [LARGE SCALE GENOMIC DNA]</scope>
    <source>
        <strain>RM4018</strain>
    </source>
</reference>
<dbReference type="EC" id="2.7.7.18" evidence="1"/>
<dbReference type="EMBL" id="CP000361">
    <property type="protein sequence ID" value="ABV68345.1"/>
    <property type="molecule type" value="Genomic_DNA"/>
</dbReference>
<dbReference type="RefSeq" id="WP_012147995.1">
    <property type="nucleotide sequence ID" value="NC_009850.1"/>
</dbReference>
<dbReference type="SMR" id="A8EWM2"/>
<dbReference type="STRING" id="367737.Abu_2131"/>
<dbReference type="GeneID" id="24304268"/>
<dbReference type="KEGG" id="abu:Abu_2131"/>
<dbReference type="eggNOG" id="COG1057">
    <property type="taxonomic scope" value="Bacteria"/>
</dbReference>
<dbReference type="HOGENOM" id="CLU_069765_3_1_7"/>
<dbReference type="UniPathway" id="UPA00253">
    <property type="reaction ID" value="UER00332"/>
</dbReference>
<dbReference type="Proteomes" id="UP000001136">
    <property type="component" value="Chromosome"/>
</dbReference>
<dbReference type="GO" id="GO:0005524">
    <property type="term" value="F:ATP binding"/>
    <property type="evidence" value="ECO:0007669"/>
    <property type="project" value="UniProtKB-KW"/>
</dbReference>
<dbReference type="GO" id="GO:0004515">
    <property type="term" value="F:nicotinate-nucleotide adenylyltransferase activity"/>
    <property type="evidence" value="ECO:0007669"/>
    <property type="project" value="UniProtKB-UniRule"/>
</dbReference>
<dbReference type="GO" id="GO:0009435">
    <property type="term" value="P:NAD biosynthetic process"/>
    <property type="evidence" value="ECO:0007669"/>
    <property type="project" value="UniProtKB-UniRule"/>
</dbReference>
<dbReference type="CDD" id="cd02165">
    <property type="entry name" value="NMNAT"/>
    <property type="match status" value="1"/>
</dbReference>
<dbReference type="Gene3D" id="3.40.50.620">
    <property type="entry name" value="HUPs"/>
    <property type="match status" value="1"/>
</dbReference>
<dbReference type="HAMAP" id="MF_00244">
    <property type="entry name" value="NaMN_adenylyltr"/>
    <property type="match status" value="1"/>
</dbReference>
<dbReference type="InterPro" id="IPR004821">
    <property type="entry name" value="Cyt_trans-like"/>
</dbReference>
<dbReference type="InterPro" id="IPR005248">
    <property type="entry name" value="NadD/NMNAT"/>
</dbReference>
<dbReference type="InterPro" id="IPR014729">
    <property type="entry name" value="Rossmann-like_a/b/a_fold"/>
</dbReference>
<dbReference type="NCBIfam" id="TIGR00125">
    <property type="entry name" value="cyt_tran_rel"/>
    <property type="match status" value="1"/>
</dbReference>
<dbReference type="NCBIfam" id="TIGR00482">
    <property type="entry name" value="nicotinate (nicotinamide) nucleotide adenylyltransferase"/>
    <property type="match status" value="1"/>
</dbReference>
<dbReference type="PANTHER" id="PTHR39321">
    <property type="entry name" value="NICOTINATE-NUCLEOTIDE ADENYLYLTRANSFERASE-RELATED"/>
    <property type="match status" value="1"/>
</dbReference>
<dbReference type="PANTHER" id="PTHR39321:SF3">
    <property type="entry name" value="PHOSPHOPANTETHEINE ADENYLYLTRANSFERASE"/>
    <property type="match status" value="1"/>
</dbReference>
<dbReference type="Pfam" id="PF01467">
    <property type="entry name" value="CTP_transf_like"/>
    <property type="match status" value="1"/>
</dbReference>
<dbReference type="SUPFAM" id="SSF52374">
    <property type="entry name" value="Nucleotidylyl transferase"/>
    <property type="match status" value="1"/>
</dbReference>
<sequence length="182" mass="21426">MKIAIFGGSFDPIHIAHKAIVKRALEELEIDKLIIVPTYLNPFKSSFYLEPKVRFELLKKVFEKVEKVEISDYEINQEKLSYSFNTVNYLKDLYKASKIYFILGQDNVENLDKWYKIEELKKMVEFVIATRSGYKSDKLKDFRTLNIDIDVSSTLLRTQIDTKYIPKEIKEDILNLDKGKKN</sequence>
<accession>A8EWM2</accession>